<name>YUBK_ECO57</name>
<sequence>MCPECFFLMLFFCGYRACYCSSSFSSSSSSSSFRSSPAYGFSGRPPGGAGCRERSQRSCLRPGGLPSLTRNPGLQRPFRSRSLCRAVACAPGIPAKGRRDVRGNAVSQTALHVVAAGPCSLPAGCHTPV</sequence>
<geneLocation type="plasmid">
    <name>pO157</name>
</geneLocation>
<evidence type="ECO:0000255" key="1"/>
<evidence type="ECO:0000256" key="2">
    <source>
        <dbReference type="SAM" id="MobiDB-lite"/>
    </source>
</evidence>
<protein>
    <recommendedName>
        <fullName>Uncharacterized serine-rich protein YubK</fullName>
    </recommendedName>
</protein>
<dbReference type="EMBL" id="AF074613">
    <property type="status" value="NOT_ANNOTATED_CDS"/>
    <property type="molecule type" value="Genomic_DNA"/>
</dbReference>
<dbReference type="EMBL" id="AB011549">
    <property type="protein sequence ID" value="BAA31801.1"/>
    <property type="molecule type" value="Genomic_DNA"/>
</dbReference>
<dbReference type="PIR" id="T00282">
    <property type="entry name" value="T00282"/>
</dbReference>
<dbReference type="RefSeq" id="NP_052651.1">
    <property type="nucleotide sequence ID" value="NC_002128.1"/>
</dbReference>
<dbReference type="KEGG" id="ecs:pO157p44"/>
<dbReference type="HOGENOM" id="CLU_157847_0_0_6"/>
<dbReference type="Proteomes" id="UP000000558">
    <property type="component" value="Plasmid pO157"/>
</dbReference>
<dbReference type="Proteomes" id="UP000002519">
    <property type="component" value="Plasmid pO157"/>
</dbReference>
<feature type="signal peptide" evidence="1">
    <location>
        <begin position="1"/>
        <end position="17"/>
    </location>
</feature>
<feature type="chain" id="PRO_0000269542" description="Uncharacterized serine-rich protein YubK">
    <location>
        <begin position="18"/>
        <end position="129"/>
    </location>
</feature>
<feature type="region of interest" description="Disordered" evidence="2">
    <location>
        <begin position="26"/>
        <end position="76"/>
    </location>
</feature>
<feature type="compositionally biased region" description="Low complexity" evidence="2">
    <location>
        <begin position="26"/>
        <end position="36"/>
    </location>
</feature>
<keyword id="KW-0614">Plasmid</keyword>
<keyword id="KW-1185">Reference proteome</keyword>
<keyword id="KW-0732">Signal</keyword>
<accession>O82903</accession>
<organism>
    <name type="scientific">Escherichia coli O157:H7</name>
    <dbReference type="NCBI Taxonomy" id="83334"/>
    <lineage>
        <taxon>Bacteria</taxon>
        <taxon>Pseudomonadati</taxon>
        <taxon>Pseudomonadota</taxon>
        <taxon>Gammaproteobacteria</taxon>
        <taxon>Enterobacterales</taxon>
        <taxon>Enterobacteriaceae</taxon>
        <taxon>Escherichia</taxon>
    </lineage>
</organism>
<reference key="1">
    <citation type="journal article" date="1998" name="Nucleic Acids Res.">
        <title>The complete DNA sequence and analysis of the large virulence plasmid of Escherichia coli O157:H7.</title>
        <authorList>
            <person name="Burland V."/>
            <person name="Shao Y."/>
            <person name="Perna N.T."/>
            <person name="Plunkett G. III"/>
            <person name="Sofia H.J."/>
            <person name="Blattner F.R."/>
        </authorList>
    </citation>
    <scope>NUCLEOTIDE SEQUENCE [LARGE SCALE GENOMIC DNA]</scope>
    <source>
        <strain>O157:H7 / EDL933 / ATCC 700927 / EHEC</strain>
    </source>
</reference>
<reference key="2">
    <citation type="journal article" date="1998" name="DNA Res.">
        <title>Complete nucleotide sequences of 93-kb and 3.3-kb plasmids of an enterohemorrhagic Escherichia coli O157:H7 derived from Sakai outbreak.</title>
        <authorList>
            <person name="Makino K."/>
            <person name="Ishii K."/>
            <person name="Yasunaga T."/>
            <person name="Hattori M."/>
            <person name="Yokoyama K."/>
            <person name="Yatsudo H.C."/>
            <person name="Kubota Y."/>
            <person name="Yamaichi Y."/>
            <person name="Iida T."/>
            <person name="Yamamoto K."/>
            <person name="Honda T."/>
            <person name="Han C.G."/>
            <person name="Ohtsubo A."/>
            <person name="Kasamatsu M."/>
            <person name="Hayashi T."/>
            <person name="Kuhara S."/>
            <person name="Shinagawa H."/>
        </authorList>
    </citation>
    <scope>NUCLEOTIDE SEQUENCE [LARGE SCALE GENOMIC DNA]</scope>
    <source>
        <strain>O157:H7 / Sakai / RIMD 0509952 / EHEC</strain>
    </source>
</reference>
<gene>
    <name type="primary">yubK</name>
    <name type="ordered locus">L7079.1</name>
    <name type="ordered locus">ECO57PM44</name>
</gene>
<proteinExistence type="inferred from homology"/>